<dbReference type="EMBL" id="L12467">
    <property type="protein sequence ID" value="AAA34635.1"/>
    <property type="molecule type" value="Genomic_DNA"/>
</dbReference>
<dbReference type="EMBL" id="X91837">
    <property type="protein sequence ID" value="CAA62949.1"/>
    <property type="molecule type" value="Genomic_DNA"/>
</dbReference>
<dbReference type="EMBL" id="Z72717">
    <property type="protein sequence ID" value="CAA96907.1"/>
    <property type="molecule type" value="Genomic_DNA"/>
</dbReference>
<dbReference type="EMBL" id="BK006941">
    <property type="protein sequence ID" value="DAA07919.1"/>
    <property type="molecule type" value="Genomic_DNA"/>
</dbReference>
<dbReference type="PIR" id="A48126">
    <property type="entry name" value="A48126"/>
</dbReference>
<dbReference type="RefSeq" id="NP_011320.3">
    <property type="nucleotide sequence ID" value="NM_001181060.3"/>
</dbReference>
<dbReference type="PDB" id="7NRC">
    <property type="method" value="EM"/>
    <property type="resolution" value="3.90 A"/>
    <property type="chains" value="A=1324-1638"/>
</dbReference>
<dbReference type="PDBsum" id="7NRC"/>
<dbReference type="EMDB" id="EMD-12534"/>
<dbReference type="BioGRID" id="33062">
    <property type="interactions" value="506"/>
</dbReference>
<dbReference type="ComplexPortal" id="CPX-1808">
    <property type="entry name" value="GCN1-GCN20 complex"/>
</dbReference>
<dbReference type="DIP" id="DIP-2344N"/>
<dbReference type="FunCoup" id="P33892">
    <property type="interactions" value="1743"/>
</dbReference>
<dbReference type="IntAct" id="P33892">
    <property type="interactions" value="140"/>
</dbReference>
<dbReference type="MINT" id="P33892"/>
<dbReference type="STRING" id="4932.YGL195W"/>
<dbReference type="iPTMnet" id="P33892"/>
<dbReference type="PaxDb" id="4932-YGL195W"/>
<dbReference type="PeptideAtlas" id="P33892"/>
<dbReference type="EnsemblFungi" id="YGL195W_mRNA">
    <property type="protein sequence ID" value="YGL195W"/>
    <property type="gene ID" value="YGL195W"/>
</dbReference>
<dbReference type="GeneID" id="852680"/>
<dbReference type="KEGG" id="sce:YGL195W"/>
<dbReference type="AGR" id="SGD:S000003163"/>
<dbReference type="SGD" id="S000003163">
    <property type="gene designation" value="GCN1"/>
</dbReference>
<dbReference type="VEuPathDB" id="FungiDB:YGL195W"/>
<dbReference type="eggNOG" id="KOG1242">
    <property type="taxonomic scope" value="Eukaryota"/>
</dbReference>
<dbReference type="GeneTree" id="ENSGT00940000153612"/>
<dbReference type="HOGENOM" id="CLU_000504_2_0_1"/>
<dbReference type="InParanoid" id="P33892"/>
<dbReference type="OMA" id="SMKIFLH"/>
<dbReference type="OrthoDB" id="5148094at2759"/>
<dbReference type="BioCyc" id="YEAST:G3O-30676-MONOMER"/>
<dbReference type="BioGRID-ORCS" id="852680">
    <property type="hits" value="0 hits in 10 CRISPR screens"/>
</dbReference>
<dbReference type="CD-CODE" id="E03F929F">
    <property type="entry name" value="Stress granule"/>
</dbReference>
<dbReference type="PRO" id="PR:P33892"/>
<dbReference type="Proteomes" id="UP000002311">
    <property type="component" value="Chromosome VII"/>
</dbReference>
<dbReference type="RNAct" id="P33892">
    <property type="molecule type" value="protein"/>
</dbReference>
<dbReference type="GO" id="GO:0005829">
    <property type="term" value="C:cytosol"/>
    <property type="evidence" value="ECO:0000314"/>
    <property type="project" value="SGD"/>
</dbReference>
<dbReference type="GO" id="GO:0022626">
    <property type="term" value="C:cytosolic ribosome"/>
    <property type="evidence" value="ECO:0000314"/>
    <property type="project" value="SGD"/>
</dbReference>
<dbReference type="GO" id="GO:0005739">
    <property type="term" value="C:mitochondrion"/>
    <property type="evidence" value="ECO:0007005"/>
    <property type="project" value="SGD"/>
</dbReference>
<dbReference type="GO" id="GO:0043008">
    <property type="term" value="F:ATP-dependent protein binding"/>
    <property type="evidence" value="ECO:0000314"/>
    <property type="project" value="UniProtKB"/>
</dbReference>
<dbReference type="GO" id="GO:0019901">
    <property type="term" value="F:protein kinase binding"/>
    <property type="evidence" value="ECO:0000353"/>
    <property type="project" value="UniProtKB"/>
</dbReference>
<dbReference type="GO" id="GO:0019887">
    <property type="term" value="F:protein kinase regulator activity"/>
    <property type="evidence" value="ECO:0000314"/>
    <property type="project" value="UniProt"/>
</dbReference>
<dbReference type="GO" id="GO:0043539">
    <property type="term" value="F:protein serine/threonine kinase activator activity"/>
    <property type="evidence" value="ECO:0000314"/>
    <property type="project" value="UniProtKB"/>
</dbReference>
<dbReference type="GO" id="GO:0043022">
    <property type="term" value="F:ribosome binding"/>
    <property type="evidence" value="ECO:0000314"/>
    <property type="project" value="UniProtKB"/>
</dbReference>
<dbReference type="GO" id="GO:0170011">
    <property type="term" value="F:stalled ribosome sensor activity"/>
    <property type="evidence" value="ECO:0000314"/>
    <property type="project" value="UniProt"/>
</dbReference>
<dbReference type="GO" id="GO:0031369">
    <property type="term" value="F:translation initiation factor binding"/>
    <property type="evidence" value="ECO:0000353"/>
    <property type="project" value="UniProtKB"/>
</dbReference>
<dbReference type="GO" id="GO:0034198">
    <property type="term" value="P:cellular response to amino acid starvation"/>
    <property type="evidence" value="ECO:0000314"/>
    <property type="project" value="UniProtKB"/>
</dbReference>
<dbReference type="GO" id="GO:0140469">
    <property type="term" value="P:GCN2-mediated signaling"/>
    <property type="evidence" value="ECO:0000314"/>
    <property type="project" value="UniProtKB"/>
</dbReference>
<dbReference type="GO" id="GO:0033674">
    <property type="term" value="P:positive regulation of kinase activity"/>
    <property type="evidence" value="ECO:0000315"/>
    <property type="project" value="UniProtKB"/>
</dbReference>
<dbReference type="GO" id="GO:0001934">
    <property type="term" value="P:positive regulation of protein phosphorylation"/>
    <property type="evidence" value="ECO:0000314"/>
    <property type="project" value="UniProtKB"/>
</dbReference>
<dbReference type="GO" id="GO:0071264">
    <property type="term" value="P:positive regulation of translational initiation in response to starvation"/>
    <property type="evidence" value="ECO:0000314"/>
    <property type="project" value="UniProtKB"/>
</dbReference>
<dbReference type="GO" id="GO:1990611">
    <property type="term" value="P:regulation of cytoplasmic translational initiation in response to stress"/>
    <property type="evidence" value="ECO:0000315"/>
    <property type="project" value="UniProtKB"/>
</dbReference>
<dbReference type="GO" id="GO:0006417">
    <property type="term" value="P:regulation of translation"/>
    <property type="evidence" value="ECO:0000318"/>
    <property type="project" value="GO_Central"/>
</dbReference>
<dbReference type="GO" id="GO:0006448">
    <property type="term" value="P:regulation of translational elongation"/>
    <property type="evidence" value="ECO:0000315"/>
    <property type="project" value="SGD"/>
</dbReference>
<dbReference type="GO" id="GO:0072344">
    <property type="term" value="P:rescue of stalled ribosome"/>
    <property type="evidence" value="ECO:0000314"/>
    <property type="project" value="UniProtKB"/>
</dbReference>
<dbReference type="FunFam" id="1.25.10.10:FF:000090">
    <property type="entry name" value="eIF-2-alpha kinase activator GCN1"/>
    <property type="match status" value="1"/>
</dbReference>
<dbReference type="FunFam" id="1.25.10.10:FF:001254">
    <property type="entry name" value="eIF-2-alpha kinase activator GCN1"/>
    <property type="match status" value="1"/>
</dbReference>
<dbReference type="FunFam" id="1.25.10.10:FF:001479">
    <property type="entry name" value="eIF-2-alpha kinase activator GCN1"/>
    <property type="match status" value="1"/>
</dbReference>
<dbReference type="FunFam" id="1.25.10.10:FF:000096">
    <property type="entry name" value="eIF-2-alpha kinase activator gcn1"/>
    <property type="match status" value="1"/>
</dbReference>
<dbReference type="Gene3D" id="1.25.10.10">
    <property type="entry name" value="Leucine-rich Repeat Variant"/>
    <property type="match status" value="6"/>
</dbReference>
<dbReference type="InterPro" id="IPR011989">
    <property type="entry name" value="ARM-like"/>
</dbReference>
<dbReference type="InterPro" id="IPR016024">
    <property type="entry name" value="ARM-type_fold"/>
</dbReference>
<dbReference type="InterPro" id="IPR022716">
    <property type="entry name" value="Gcn1_N"/>
</dbReference>
<dbReference type="InterPro" id="IPR056810">
    <property type="entry name" value="GNC1-like_N"/>
</dbReference>
<dbReference type="InterPro" id="IPR056809">
    <property type="entry name" value="HEAT_GCN1_fung"/>
</dbReference>
<dbReference type="InterPro" id="IPR021133">
    <property type="entry name" value="HEAT_type_2"/>
</dbReference>
<dbReference type="InterPro" id="IPR034085">
    <property type="entry name" value="TOG"/>
</dbReference>
<dbReference type="PANTHER" id="PTHR23346:SF7">
    <property type="entry name" value="STALLED RIBOSOME SENSOR GCN1"/>
    <property type="match status" value="1"/>
</dbReference>
<dbReference type="PANTHER" id="PTHR23346">
    <property type="entry name" value="TRANSLATIONAL ACTIVATOR GCN1-RELATED"/>
    <property type="match status" value="1"/>
</dbReference>
<dbReference type="Pfam" id="PF12074">
    <property type="entry name" value="Gcn1_N"/>
    <property type="match status" value="2"/>
</dbReference>
<dbReference type="Pfam" id="PF24993">
    <property type="entry name" value="GNC1_N"/>
    <property type="match status" value="1"/>
</dbReference>
<dbReference type="Pfam" id="PF24984">
    <property type="entry name" value="HEAT_EF3_GNC1"/>
    <property type="match status" value="1"/>
</dbReference>
<dbReference type="Pfam" id="PF24987">
    <property type="entry name" value="HEAT_EF3_N"/>
    <property type="match status" value="1"/>
</dbReference>
<dbReference type="Pfam" id="PF23271">
    <property type="entry name" value="HEAT_GCN1"/>
    <property type="match status" value="1"/>
</dbReference>
<dbReference type="Pfam" id="PF24916">
    <property type="entry name" value="HEAT_GCN1_fung"/>
    <property type="match status" value="1"/>
</dbReference>
<dbReference type="SMART" id="SM01349">
    <property type="entry name" value="TOG"/>
    <property type="match status" value="1"/>
</dbReference>
<dbReference type="SUPFAM" id="SSF48371">
    <property type="entry name" value="ARM repeat"/>
    <property type="match status" value="4"/>
</dbReference>
<dbReference type="PROSITE" id="PS50077">
    <property type="entry name" value="HEAT_REPEAT"/>
    <property type="match status" value="4"/>
</dbReference>
<evidence type="ECO:0000250" key="1">
    <source>
        <dbReference type="UniProtKB" id="Q92616"/>
    </source>
</evidence>
<evidence type="ECO:0000255" key="2"/>
<evidence type="ECO:0000269" key="3">
    <source>
    </source>
</evidence>
<evidence type="ECO:0000269" key="4">
    <source>
    </source>
</evidence>
<evidence type="ECO:0000269" key="5">
    <source>
    </source>
</evidence>
<evidence type="ECO:0000269" key="6">
    <source>
    </source>
</evidence>
<evidence type="ECO:0000269" key="7">
    <source>
    </source>
</evidence>
<evidence type="ECO:0000269" key="8">
    <source>
    </source>
</evidence>
<evidence type="ECO:0000269" key="9">
    <source>
    </source>
</evidence>
<evidence type="ECO:0000269" key="10">
    <source>
    </source>
</evidence>
<evidence type="ECO:0000269" key="11">
    <source>
    </source>
</evidence>
<evidence type="ECO:0000269" key="12">
    <source>
    </source>
</evidence>
<evidence type="ECO:0000269" key="13">
    <source>
    </source>
</evidence>
<evidence type="ECO:0000269" key="14">
    <source>
    </source>
</evidence>
<evidence type="ECO:0000269" key="15">
    <source>
    </source>
</evidence>
<evidence type="ECO:0000269" key="16">
    <source>
    </source>
</evidence>
<evidence type="ECO:0000269" key="17">
    <source>
    </source>
</evidence>
<evidence type="ECO:0000269" key="18">
    <source>
    </source>
</evidence>
<evidence type="ECO:0000269" key="19">
    <source>
    </source>
</evidence>
<evidence type="ECO:0000269" key="20">
    <source>
    </source>
</evidence>
<evidence type="ECO:0000269" key="21">
    <source>
    </source>
</evidence>
<evidence type="ECO:0000269" key="22">
    <source>
    </source>
</evidence>
<evidence type="ECO:0000269" key="23">
    <source>
    </source>
</evidence>
<evidence type="ECO:0000303" key="24">
    <source>
    </source>
</evidence>
<evidence type="ECO:0000303" key="25">
    <source>
    </source>
</evidence>
<evidence type="ECO:0000305" key="26"/>
<evidence type="ECO:0000305" key="27">
    <source>
    </source>
</evidence>
<evidence type="ECO:0000312" key="28">
    <source>
        <dbReference type="SGD" id="S000003163"/>
    </source>
</evidence>
<evidence type="ECO:0007744" key="29">
    <source>
        <dbReference type="PDB" id="7NRC"/>
    </source>
</evidence>
<organism>
    <name type="scientific">Saccharomyces cerevisiae (strain ATCC 204508 / S288c)</name>
    <name type="common">Baker's yeast</name>
    <dbReference type="NCBI Taxonomy" id="559292"/>
    <lineage>
        <taxon>Eukaryota</taxon>
        <taxon>Fungi</taxon>
        <taxon>Dikarya</taxon>
        <taxon>Ascomycota</taxon>
        <taxon>Saccharomycotina</taxon>
        <taxon>Saccharomycetes</taxon>
        <taxon>Saccharomycetales</taxon>
        <taxon>Saccharomycetaceae</taxon>
        <taxon>Saccharomyces</taxon>
    </lineage>
</organism>
<reference key="1">
    <citation type="journal article" date="1993" name="Mol. Cell. Biol.">
        <title>GCN1, a translational activator of GCN4 in Saccharomyces cerevisiae, is required for phosphorylation of eukaryotic translation initiation factor 2 by protein kinase GCN2.</title>
        <authorList>
            <person name="Marton M.J."/>
            <person name="Crouch D."/>
            <person name="Hinnebusch A.G."/>
        </authorList>
    </citation>
    <scope>NUCLEOTIDE SEQUENCE [GENOMIC DNA]</scope>
    <scope>FUNCTION</scope>
</reference>
<reference key="2">
    <citation type="journal article" date="1997" name="Yeast">
        <title>Sequencing of a 40.5 kb fragment located on the left arm of chromosome VII from Saccharomyces cerevisiae.</title>
        <authorList>
            <person name="Coglievina M."/>
            <person name="Klima R."/>
            <person name="Bertani I."/>
            <person name="Delneri D."/>
            <person name="Zaccaria P."/>
            <person name="Bruschi C.V."/>
        </authorList>
    </citation>
    <scope>NUCLEOTIDE SEQUENCE [GENOMIC DNA]</scope>
    <source>
        <strain>ATCC 96604 / S288c / FY1679</strain>
    </source>
</reference>
<reference key="3">
    <citation type="journal article" date="1997" name="Nature">
        <title>The nucleotide sequence of Saccharomyces cerevisiae chromosome VII.</title>
        <authorList>
            <person name="Tettelin H."/>
            <person name="Agostoni-Carbone M.L."/>
            <person name="Albermann K."/>
            <person name="Albers M."/>
            <person name="Arroyo J."/>
            <person name="Backes U."/>
            <person name="Barreiros T."/>
            <person name="Bertani I."/>
            <person name="Bjourson A.J."/>
            <person name="Brueckner M."/>
            <person name="Bruschi C.V."/>
            <person name="Carignani G."/>
            <person name="Castagnoli L."/>
            <person name="Cerdan E."/>
            <person name="Clemente M.L."/>
            <person name="Coblenz A."/>
            <person name="Coglievina M."/>
            <person name="Coissac E."/>
            <person name="Defoor E."/>
            <person name="Del Bino S."/>
            <person name="Delius H."/>
            <person name="Delneri D."/>
            <person name="de Wergifosse P."/>
            <person name="Dujon B."/>
            <person name="Durand P."/>
            <person name="Entian K.-D."/>
            <person name="Eraso P."/>
            <person name="Escribano V."/>
            <person name="Fabiani L."/>
            <person name="Fartmann B."/>
            <person name="Feroli F."/>
            <person name="Feuermann M."/>
            <person name="Frontali L."/>
            <person name="Garcia-Gonzalez M."/>
            <person name="Garcia-Saez M.I."/>
            <person name="Goffeau A."/>
            <person name="Guerreiro P."/>
            <person name="Hani J."/>
            <person name="Hansen M."/>
            <person name="Hebling U."/>
            <person name="Hernandez K."/>
            <person name="Heumann K."/>
            <person name="Hilger F."/>
            <person name="Hofmann B."/>
            <person name="Indge K.J."/>
            <person name="James C.M."/>
            <person name="Klima R."/>
            <person name="Koetter P."/>
            <person name="Kramer B."/>
            <person name="Kramer W."/>
            <person name="Lauquin G."/>
            <person name="Leuther H."/>
            <person name="Louis E.J."/>
            <person name="Maillier E."/>
            <person name="Marconi A."/>
            <person name="Martegani E."/>
            <person name="Mazon M.J."/>
            <person name="Mazzoni C."/>
            <person name="McReynolds A.D.K."/>
            <person name="Melchioretto P."/>
            <person name="Mewes H.-W."/>
            <person name="Minenkova O."/>
            <person name="Mueller-Auer S."/>
            <person name="Nawrocki A."/>
            <person name="Netter P."/>
            <person name="Neu R."/>
            <person name="Nombela C."/>
            <person name="Oliver S.G."/>
            <person name="Panzeri L."/>
            <person name="Paoluzi S."/>
            <person name="Plevani P."/>
            <person name="Portetelle D."/>
            <person name="Portillo F."/>
            <person name="Potier S."/>
            <person name="Purnelle B."/>
            <person name="Rieger M."/>
            <person name="Riles L."/>
            <person name="Rinaldi T."/>
            <person name="Robben J."/>
            <person name="Rodrigues-Pousada C."/>
            <person name="Rodriguez-Belmonte E."/>
            <person name="Rodriguez-Torres A.M."/>
            <person name="Rose M."/>
            <person name="Ruzzi M."/>
            <person name="Saliola M."/>
            <person name="Sanchez-Perez M."/>
            <person name="Schaefer B."/>
            <person name="Schaefer M."/>
            <person name="Scharfe M."/>
            <person name="Schmidheini T."/>
            <person name="Schreer A."/>
            <person name="Skala J."/>
            <person name="Souciet J.-L."/>
            <person name="Steensma H.Y."/>
            <person name="Talla E."/>
            <person name="Thierry A."/>
            <person name="Vandenbol M."/>
            <person name="van der Aart Q.J.M."/>
            <person name="Van Dyck L."/>
            <person name="Vanoni M."/>
            <person name="Verhasselt P."/>
            <person name="Voet M."/>
            <person name="Volckaert G."/>
            <person name="Wambutt R."/>
            <person name="Watson M.D."/>
            <person name="Weber N."/>
            <person name="Wedler E."/>
            <person name="Wedler H."/>
            <person name="Wipfli P."/>
            <person name="Wolf K."/>
            <person name="Wright L.F."/>
            <person name="Zaccaria P."/>
            <person name="Zimmermann M."/>
            <person name="Zollner A."/>
            <person name="Kleine K."/>
        </authorList>
    </citation>
    <scope>NUCLEOTIDE SEQUENCE [LARGE SCALE GENOMIC DNA]</scope>
    <source>
        <strain>ATCC 204508 / S288c</strain>
    </source>
</reference>
<reference key="4">
    <citation type="journal article" date="2014" name="G3 (Bethesda)">
        <title>The reference genome sequence of Saccharomyces cerevisiae: Then and now.</title>
        <authorList>
            <person name="Engel S.R."/>
            <person name="Dietrich F.S."/>
            <person name="Fisk D.G."/>
            <person name="Binkley G."/>
            <person name="Balakrishnan R."/>
            <person name="Costanzo M.C."/>
            <person name="Dwight S.S."/>
            <person name="Hitz B.C."/>
            <person name="Karra K."/>
            <person name="Nash R.S."/>
            <person name="Weng S."/>
            <person name="Wong E.D."/>
            <person name="Lloyd P."/>
            <person name="Skrzypek M.S."/>
            <person name="Miyasato S.R."/>
            <person name="Simison M."/>
            <person name="Cherry J.M."/>
        </authorList>
    </citation>
    <scope>GENOME REANNOTATION</scope>
    <source>
        <strain>ATCC 204508 / S288c</strain>
    </source>
</reference>
<reference key="5">
    <citation type="journal article" date="1995" name="EMBO J.">
        <title>GCN20, a novel ATP binding cassette protein, and GCN1 reside in a complex that mediates activation of the eIF-2 alpha kinase GCN2 in amino acid-starved cells.</title>
        <authorList>
            <person name="Vazquez de Aldana C.R."/>
            <person name="Marton M.J."/>
            <person name="Hinnebusch A.G."/>
        </authorList>
    </citation>
    <scope>FUNCTION</scope>
    <scope>INTERACTION WITH GCN20</scope>
    <scope>ASSOCIATION WITH RIBOSOMES</scope>
</reference>
<reference key="6">
    <citation type="journal article" date="1997" name="Mol. Cell. Biol.">
        <title>Evidence that GCN1 and GCN20, translational regulators of GCN4, function on elongating ribosomes in activation of eIF2alpha kinase GCN2.</title>
        <authorList>
            <person name="Marton M.J."/>
            <person name="Vazquez de Aldana C.R."/>
            <person name="Qiu H."/>
            <person name="Chakraburtty K."/>
            <person name="Hinnebusch A.G."/>
        </authorList>
    </citation>
    <scope>FUNCTION</scope>
    <scope>INTERACTION WITH GCN20</scope>
    <scope>ASSOCIATION WITH RIBOSOMES</scope>
    <scope>SUBCELLULAR LOCATION</scope>
    <scope>DOMAIN</scope>
    <scope>MUTAGENESIS OF GLY-1444</scope>
</reference>
<reference key="7">
    <citation type="journal article" date="2000" name="EMBO J.">
        <title>Association of GCN1-GCN20 regulatory complex with the N-terminus of eIF2alpha kinase GCN2 is required for GCN2 activation.</title>
        <authorList>
            <person name="Garcia-Barrio M."/>
            <person name="Dong J."/>
            <person name="Ufano S."/>
            <person name="Hinnebusch A.G."/>
        </authorList>
    </citation>
    <scope>INTERACTION WITH GCN2</scope>
    <scope>IDENTIFICATION IN A COMPLEX WITH GCN2 AND GCN20</scope>
</reference>
<reference key="8">
    <citation type="journal article" date="2000" name="EMBO J.">
        <title>Separate domains in GCN1 for binding protein kinase GCN2 and ribosomes are required for GCN2 activation in amino acid-starved cells.</title>
        <authorList>
            <person name="Sattlegger E."/>
            <person name="Hinnebusch A.G."/>
        </authorList>
    </citation>
    <scope>INTERACTION WITH GCN2 AND GCN20</scope>
    <scope>IDENTIFICATION IN A COMPLEX WITH GCN2 AND GCN20</scope>
    <scope>ASSOCIATION WITH RIBOSOMES</scope>
    <scope>MUTAGENESIS OF ARG-2259</scope>
</reference>
<reference key="9">
    <citation type="journal article" date="2000" name="J. Biol. Chem.">
        <title>GI domain-mediated association of the eukaryotic initiation factor 2alpha kinase GCN2 with its activator GCN1 is required for general amino acid control in budding yeast.</title>
        <authorList>
            <person name="Kubota H."/>
            <person name="Sakaki Y."/>
            <person name="Ito T."/>
        </authorList>
    </citation>
    <scope>FUNCTION</scope>
    <scope>INTERACTION WITH GCN2</scope>
</reference>
<reference key="10">
    <citation type="journal article" date="2000" name="Mol. Cell. Biol.">
        <title>Glucose limitation induces GCN4 translation by activation of Gcn2 protein kinase.</title>
        <authorList>
            <person name="Yang R."/>
            <person name="Wek S.A."/>
            <person name="Wek R.C."/>
        </authorList>
    </citation>
    <scope>FUNCTION</scope>
    <scope>DISRUPTION PHENOTYPE</scope>
</reference>
<reference key="11">
    <citation type="journal article" date="2001" name="J. Biol. Chem.">
        <title>Budding yeast GCN1 binds the GI domain to activate the eIF2alpha kinase GCN2.</title>
        <authorList>
            <person name="Kubota H."/>
            <person name="Ota K."/>
            <person name="Sakaki Y."/>
            <person name="Ito T."/>
        </authorList>
    </citation>
    <scope>FUNCTION</scope>
    <scope>INTERACTION WITH GCN2</scope>
    <scope>MUTAGENESIS OF PHE-2291; SER-2304 AND LEU-2353</scope>
</reference>
<reference key="12">
    <citation type="journal article" date="2003" name="Nature">
        <title>Global analysis of protein expression in yeast.</title>
        <authorList>
            <person name="Ghaemmaghami S."/>
            <person name="Huh W.-K."/>
            <person name="Bower K."/>
            <person name="Howson R.W."/>
            <person name="Belle A."/>
            <person name="Dephoure N."/>
            <person name="O'Shea E.K."/>
            <person name="Weissman J.S."/>
        </authorList>
    </citation>
    <scope>LEVEL OF PROTEIN EXPRESSION [LARGE SCALE ANALYSIS]</scope>
</reference>
<reference key="13">
    <citation type="journal article" date="2004" name="J. Biol. Chem.">
        <title>YIH1 is an actin-binding protein that inhibits protein kinase GCN2 and impairs general amino acid control when overexpressed.</title>
        <authorList>
            <person name="Sattlegger E."/>
            <person name="Swanson M.J."/>
            <person name="Ashcraft E.A."/>
            <person name="Jennings J.L."/>
            <person name="Fekete R.A."/>
            <person name="Link A.J."/>
            <person name="Hinnebusch A.G."/>
        </authorList>
    </citation>
    <scope>INTERACTION WITH YIH1</scope>
    <scope>MUTAGENESIS OF ARG-2259</scope>
</reference>
<reference key="14">
    <citation type="journal article" date="2005" name="J. Biol. Chem.">
        <title>Polyribosome binding by GCN1 is required for full activation of eukaryotic translation initiation factor 2{alpha} kinase GCN2 during amino acid starvation.</title>
        <authorList>
            <person name="Sattlegger E."/>
            <person name="Hinnebusch A.G."/>
        </authorList>
    </citation>
    <scope>FUNCTION</scope>
    <scope>INTERACTION WITH GCN20</scope>
    <scope>ASSOCIATION WITH RIBOSOMES</scope>
    <scope>MUTAGENESIS OF 757-LYS-LYS-758; LYS-762; LYS-765; LYS-775; 777-ARG-LYS-778; 782-LYS-LYS-783; 786-LYS-LYS-787; LYS-790; GLU-1458 AND 1461-TRP--ARG-1465</scope>
</reference>
<reference key="15">
    <citation type="journal article" date="2007" name="J. Proteome Res.">
        <title>Large-scale phosphorylation analysis of alpha-factor-arrested Saccharomyces cerevisiae.</title>
        <authorList>
            <person name="Li X."/>
            <person name="Gerber S.A."/>
            <person name="Rudner A.D."/>
            <person name="Beausoleil S.A."/>
            <person name="Haas W."/>
            <person name="Villen J."/>
            <person name="Elias J.E."/>
            <person name="Gygi S.P."/>
        </authorList>
    </citation>
    <scope>IDENTIFICATION BY MASS SPECTROMETRY [LARGE SCALE ANALYSIS]</scope>
    <source>
        <strain>ADR376</strain>
    </source>
</reference>
<reference key="16">
    <citation type="journal article" date="2009" name="Eukaryot. Cell">
        <title>Saccharomyces cerevisiae Rbg1 protein and its binding partner Gir2 interact on polyribosomes with Gcn1.</title>
        <authorList>
            <person name="Wout P.K."/>
            <person name="Sattlegger E."/>
            <person name="Sullivan S.M."/>
            <person name="Maddock J.R."/>
        </authorList>
    </citation>
    <scope>INTERACTION WITH GIR2</scope>
    <scope>ASSOCIATION WITH RIBOSOMES</scope>
</reference>
<reference key="17">
    <citation type="journal article" date="2009" name="Science">
        <title>Global analysis of Cdk1 substrate phosphorylation sites provides insights into evolution.</title>
        <authorList>
            <person name="Holt L.J."/>
            <person name="Tuch B.B."/>
            <person name="Villen J."/>
            <person name="Johnson A.D."/>
            <person name="Gygi S.P."/>
            <person name="Morgan D.O."/>
        </authorList>
    </citation>
    <scope>IDENTIFICATION BY MASS SPECTROMETRY [LARGE SCALE ANALYSIS]</scope>
</reference>
<reference key="18">
    <citation type="journal article" date="2011" name="J. Biol. Chem.">
        <title>Gcn1 and actin binding to Yih1: implications for activation of the eIF2 kinase GCN2.</title>
        <authorList>
            <person name="Sattlegger E."/>
            <person name="Barbosa J.A."/>
            <person name="Moraes M.C."/>
            <person name="Martins R.M."/>
            <person name="Hinnebusch A.G."/>
            <person name="Castilho B.A."/>
        </authorList>
    </citation>
    <scope>INTERACTION WITH YIH1</scope>
    <scope>MUTAGENESIS OF ARG-2259</scope>
</reference>
<reference key="19">
    <citation type="journal article" date="2012" name="FEBS J.">
        <title>Evidence that Yih1 resides in a complex with ribosomes.</title>
        <authorList>
            <person name="Waller T."/>
            <person name="Lee S.J."/>
            <person name="Sattlegger E."/>
        </authorList>
    </citation>
    <scope>INTERACTION WITH YIH1</scope>
</reference>
<reference key="20">
    <citation type="journal article" date="2014" name="Biochem. Biophys. Res. Commun.">
        <title>Evolutionarily conserved IMPACT impairs various stress responses that require GCN1 for activating the eIF2 kinase GCN2.</title>
        <authorList>
            <person name="Cambiaghi T.D."/>
            <person name="Pereira C.M."/>
            <person name="Shanmugam R."/>
            <person name="Bolech M."/>
            <person name="Wek R.C."/>
            <person name="Sattlegger E."/>
            <person name="Castilho B.A."/>
        </authorList>
    </citation>
    <scope>FUNCTION</scope>
</reference>
<reference key="21">
    <citation type="journal article" date="2011" name="J. Biol. Chem.">
        <title>Evidence that eukaryotic translation elongation factor 1A (eEF1A) binds the Gcn2 protein C terminus and inhibits Gcn2 activity.</title>
        <authorList>
            <person name="Visweswaraiah J."/>
            <person name="Lageix S."/>
            <person name="Castilho B.A."/>
            <person name="Izotova L."/>
            <person name="Kinzy T.G."/>
            <person name="Hinnebusch A.G."/>
            <person name="Sattlegger E."/>
        </authorList>
    </citation>
    <scope>INTERACTION WITH GCN2</scope>
    <scope>ASSOCIATION WITH RIBOSOMES</scope>
</reference>
<reference key="22">
    <citation type="journal article" date="2012" name="J. Biol. Chem.">
        <title>Overexpression of eukaryotic translation elongation factor 3 impairs Gcn2 protein activation.</title>
        <authorList>
            <person name="Visweswaraiah J."/>
            <person name="Lee S.J."/>
            <person name="Hinnebusch A.G."/>
            <person name="Sattlegger E."/>
        </authorList>
    </citation>
    <scope>ASSOCIATION WITH RIBOSOMES</scope>
    <scope>MUTAGENESIS OF 757-LYS-LYS-758; LYS-762; LYS-765; LYS-775; 777-ARG-LYS-778; 782-LYS-LYS-783; 786-LYS-LYS-787 AND LYS-790</scope>
</reference>
<reference key="23">
    <citation type="journal article" date="2015" name="Biochem. J.">
        <title>Gcn1 contacts the small ribosomal protein Rps10, which is required for full activation of the protein kinase Gcn2.</title>
        <authorList>
            <person name="Lee S.J."/>
            <person name="Swanson M.J."/>
            <person name="Sattlegger E."/>
        </authorList>
    </citation>
    <scope>INTERACTION WITH RPS10A AND RPS10B</scope>
    <scope>ASSOCIATION WITH RIBOSOMES</scope>
</reference>
<reference key="24">
    <citation type="journal article" date="2017" name="Biol. Direct">
        <title>Recognition of a structural domain (RWDBD) in Gcn1 proteins that interacts with the RWD domain containing proteins.</title>
        <authorList>
            <person name="Rakesh R."/>
            <person name="Krishnan R."/>
            <person name="Sattlegger E."/>
            <person name="Srinivasan N."/>
        </authorList>
    </citation>
    <scope>RWDBD DOMAIN</scope>
</reference>
<reference key="25">
    <citation type="journal article" date="2021" name="Mol. Cell">
        <title>Ribosome quality control antagonizes the activation of the integrated stress response on colliding ribosomes.</title>
        <authorList>
            <person name="Yan L.L."/>
            <person name="Zaher H.S."/>
        </authorList>
    </citation>
    <scope>FUNCTION</scope>
</reference>
<reference key="26">
    <citation type="journal article" date="2022" name="PLoS ONE">
        <title>A genetic approach to identify amino acids in Gcn1 required for Gcn2 activation.</title>
        <authorList>
            <person name="Gottfried S."/>
            <person name="Koloamatangi S.M.B.M.J."/>
            <person name="Daube C."/>
            <person name="Schiemann A.H."/>
            <person name="Sattlegger E."/>
        </authorList>
    </citation>
    <scope>FUNCTION</scope>
    <scope>RWDBD DOMAIN</scope>
    <scope>INTERACTION WITH GCN2</scope>
    <scope>MUTAGENESIS OF ASN-2224; ARG-2227; ASN-2245; LYS-2247; SER-2251; ARG-2259; VAL-2261; GLU-2263; ARG-2264; LYS-2270; ARG-2289; PHE-2291; GLN-2294; ARG-2297; LYS-2301; ASP-2305; GLU-2309; ASP-2330; GLU-2335 AND GLU-2382</scope>
</reference>
<reference evidence="29" key="27">
    <citation type="journal article" date="2021" name="Proc. Natl. Acad. Sci. U.S.A.">
        <title>Structure of Gcn1 bound to stalled and colliding 80S ribosomes.</title>
        <authorList>
            <person name="Pochopien A.A."/>
            <person name="Beckert B."/>
            <person name="Kasvandik S."/>
            <person name="Berninghausen O."/>
            <person name="Beckmann R."/>
            <person name="Tenson T."/>
            <person name="Wilson D.N."/>
        </authorList>
    </citation>
    <scope>STRUCTURE BY ELECTRON MICROSCOPY (3.90 ANGSTROMS) OF 1324-1638 IN COMPLEX WITH STALLED RIBOSOME</scope>
    <scope>FUNCTION</scope>
</reference>
<accession>P33892</accession>
<accession>D6VTV8</accession>
<sequence>MTAILNWEDISPVLEKGTRESHVSKRVPFLQDISQLVRQETLEKPQLSEIAFVLLNTFTIYEDNRSKSLVTSILLDILNLEPCLLENFIRFISDVVISNPATKAVADYLNLLDWINSFLIFVSHNSNLFEEYIPKLLVAHSYATFGVETILDNQEEGKKSQDKQNQHRKRIRYCIFQTTVKAFLKCLKDNDDSISFMKISIKTVLESYSKLKITSVGVVMIMGALTQAALQLLSRQPALHSVLKENSAEKYCEYLGKEVFLGKNPPSSFCLEIGLKPFLKEFVSQELFIKFFIPNIEKAVLRSPEVGFSILSELYAGVSPEKVNLLNAFASSKLINQYFSSFKSSKEVVRSVSLQSMIILLRKISNTDTTLEDLTKLIDEIFKNIKSNLNADYKSLISKILIEIPLTHYEVSEKICKGLSPYIGKEGNEAALTLMLNAFFVHYFSLGKPIEDLDKIISAGFADKKPALKKCWFAAFLNNSNAASEEVILNFIDGCLEFVKDSIIHYQTHGHACILASIEFTNKILALDNTELNDRVMQLIETLPENSSIGDAILTAALSTELSIENRIHAVNLLQELFYKKPEFIGFSVIDAIERRMRVQELIPQQNTSFKYVTSVLLAITSELPDKEASIKVLINALVIAQWNIFNIKNGWAGLVLRARLDPAEVVKEHASVIMEKILEITGSCEWIDTIYGACGLQAAAYAAFIQPNEFTPILCKTIEADLTADDFSRLSEEDFEIFAGEEGVLVVDVLEESMNKKLSNKNSKEYETLMWEQKIRKEQAKKNVKKLSKEEQELVNEQLAKESAVRSHVSEISTRLKRGIRLVSELSKAACLVQNGIATWFPLAVTKLLYLCSEPNISKLTEDVNNVFLQLSQNVSERLGNIRLFLGLATLRVHNANGISQDYLQEPLVELLTRVLFRIKFVSNQAAIDSISLTYILPLLINVLEKGKAIALKNADKPVVKAEFVEEDEEEEHLLLAMEIISVHAEAFEDPSIPRISIVEVLLSLLSLPSKAKIAKDCFNALCQSISVAPNQEDLDMILSNLLSPNQFVRSTILETLDNEFELEPFMKYSPEVFICRFDSDPSNREIADFIWEFNKFVVNDELLKSLFPLFNQDDSGLRLFAANAYAFGAVSLFTSEENSSKDYLNDLLNFYKEKAKPLEPILDQFGLVLVSASEQKDPWQGRSTVAITLKIMAKAFSAEDDTVVNIIKFLVDDGGLVDREPIVRQEMKEAGVELITLHGSQNSKDLIPIFEEALSSSTDSALKENVIILYGTLARHLQQSDARIHTIIERLLSTLDTPSADIQQAVSACIAPLVFQFKQKVGDYLGILMEKLLNPTVASSMRKGAAWGIAGLVKGYGISALSEFDIIRNLIEAAEDKKEPKRRESVGFCFQYLSESLGKFFEPYVIEILPNILKNLGDAVPEVRDATARATKAIMAHTTGYGVKKLIPVAVSNLDEIAWRTKRGSVQLLGNMAYLDPTQLSASLSTIVPEIVGVLNDSHKEVRKAADESLKRFGEVIRNPEIQKLVPVLLQAIGDPTKYTEEALDSLIQTQFVHYIDGPSLALIIHIIHRGMHDRSANIKRKACKIVGNMAILVDTKDLIPYLQQLIDEVEIAMVDPVPNTRATAARALGALVERLGEEQFPDLIPRLLDTLSDESKSGDRLGSAQALAEVISGLGLTKLDEMLPTILAGVTNFRAYIREGFMPLLLFLPVCFGSQFAPYINQIIQPILSGLADNDENIRDTALKAGKLIVKNYATKAVDLLLPELERGMFDENDRIRLSSVQLTGELLFQVTGISSRNEFSEEDGDHNGEFSGKLVDVLGQDRRDRILAALFVCRNDTSGIVRATTVDIWKALVPNTPRAVKEILPTLTGMIVTHLASSSNVLRNIAAQTLGDLVRRVGGNALSQLLPSLEESLIETSNSDSRQGVCIALYELIESASTETISQFQSTIVNIIRTALIDESATVREAAALSFDVFQDVVGKTAVDEVLPYLLHMLESSDNSDFALLGLQEIMSKKSDVIFPILIPTLLAPPIDAFRASALGSLAEVAGSALYKRLSIIINALVDAIIGTSEDESTKGALELALDRVFLSVNDDEGLHPLLQQIMSLLKSDNIEKRIAVLERLPNFFDKTVLDFDVYIPNFVSHAILSLDDEDQRVVNGNFNALSTLLKKVDKPTLEKLVKPAKQSLALTGRQGQDVAAFKLPRGPNCVLPIFLHGLMYGSNDEREESALAIADVVSKTPAANLKPFVSVITGPLIRVVGERFSSDIKAAILFALNVLFIKIPMFLRPFIPQLQRTFVKSLSDATNETLRLRAAKALGALIEHQPRVDPLVIELVTGAKQATDEGVKTAMLKALLEVIMKAGSKLNENSKTNIVNLVEEEMLGSNDKLAVAYAKLIGSLSEILSNDEAHKILQDKVLNADLDGETGKFAILTLNSFLKDAPTHIFNTGLIDEFVSYILNAIRSPDVYFGENGTIAAGKLLLLEGEKRSPFVKKDAAEPFKIGDENINLLINELSKAVLQPASNSTDVRRLALVVIRTLARFKFDECIKQYFDVVGPSVFSCLRDPVIPIKLAAEKAYLALFKLVEEDDMHTFNEWFAKISDRGNSIETVTGTTIQLRSVGDYTKRVGKRLANVERERIAAGGDAETMFSDRFEDEREIWAVGGVELTTDI</sequence>
<proteinExistence type="evidence at protein level"/>
<keyword id="KW-0002">3D-structure</keyword>
<keyword id="KW-0010">Activator</keyword>
<keyword id="KW-0963">Cytoplasm</keyword>
<keyword id="KW-1185">Reference proteome</keyword>
<keyword id="KW-0677">Repeat</keyword>
<keyword id="KW-0346">Stress response</keyword>
<keyword id="KW-0810">Translation regulation</keyword>
<feature type="chain" id="PRO_0000087444" description="eIF-2-alpha kinase activator GCN1">
    <location>
        <begin position="1"/>
        <end position="2672"/>
    </location>
</feature>
<feature type="repeat" description="HEAT 1" evidence="2">
    <location>
        <begin position="5"/>
        <end position="42"/>
    </location>
</feature>
<feature type="repeat" description="HEAT 2" evidence="2">
    <location>
        <begin position="79"/>
        <end position="117"/>
    </location>
</feature>
<feature type="repeat" description="HEAT 3" evidence="2">
    <location>
        <begin position="174"/>
        <end position="211"/>
    </location>
</feature>
<feature type="repeat" description="HEAT 4" evidence="2">
    <location>
        <begin position="227"/>
        <end position="267"/>
    </location>
</feature>
<feature type="repeat" description="HEAT 5" evidence="2">
    <location>
        <begin position="329"/>
        <end position="366"/>
    </location>
</feature>
<feature type="repeat" description="HEAT 6" evidence="2">
    <location>
        <begin position="372"/>
        <end position="410"/>
    </location>
</feature>
<feature type="repeat" description="HEAT 7" evidence="2">
    <location>
        <begin position="509"/>
        <end position="549"/>
    </location>
</feature>
<feature type="repeat" description="HEAT 8" evidence="2">
    <location>
        <begin position="611"/>
        <end position="648"/>
    </location>
</feature>
<feature type="repeat" description="HEAT 9" evidence="2">
    <location>
        <begin position="706"/>
        <end position="745"/>
    </location>
</feature>
<feature type="repeat" description="HEAT 10" evidence="2">
    <location>
        <begin position="902"/>
        <end position="932"/>
    </location>
</feature>
<feature type="repeat" description="HEAT 11" evidence="2">
    <location>
        <begin position="933"/>
        <end position="970"/>
    </location>
</feature>
<feature type="repeat" description="HEAT 12; degenerate" evidence="2">
    <location>
        <begin position="975"/>
        <end position="994"/>
    </location>
</feature>
<feature type="repeat" description="HEAT 13; degenerate" evidence="2">
    <location>
        <begin position="995"/>
        <end position="1030"/>
    </location>
</feature>
<feature type="repeat" description="HEAT 14" evidence="2">
    <location>
        <begin position="1031"/>
        <end position="1067"/>
    </location>
</feature>
<feature type="repeat" description="HEAT 15" evidence="2">
    <location>
        <begin position="1099"/>
        <end position="1138"/>
    </location>
</feature>
<feature type="repeat" description="HEAT 16" evidence="2">
    <location>
        <begin position="1185"/>
        <end position="1224"/>
    </location>
</feature>
<feature type="repeat" description="HEAT 17" evidence="2">
    <location>
        <begin position="1243"/>
        <end position="1281"/>
    </location>
</feature>
<feature type="repeat" description="HEAT 18" evidence="2">
    <location>
        <begin position="1284"/>
        <end position="1321"/>
    </location>
</feature>
<feature type="repeat" description="HEAT 19" evidence="2">
    <location>
        <begin position="1363"/>
        <end position="1401"/>
    </location>
</feature>
<feature type="repeat" description="HEAT 20" evidence="2">
    <location>
        <begin position="1405"/>
        <end position="1442"/>
    </location>
</feature>
<feature type="repeat" description="HEAT 21" evidence="2">
    <location>
        <begin position="1444"/>
        <end position="1480"/>
    </location>
</feature>
<feature type="repeat" description="HEAT 22" evidence="2">
    <location>
        <begin position="1484"/>
        <end position="1521"/>
    </location>
</feature>
<feature type="repeat" description="HEAT 23" evidence="2">
    <location>
        <begin position="1523"/>
        <end position="1559"/>
    </location>
</feature>
<feature type="repeat" description="HEAT 24" evidence="2">
    <location>
        <begin position="1561"/>
        <end position="1598"/>
    </location>
</feature>
<feature type="repeat" description="HEAT 25" evidence="2">
    <location>
        <begin position="1603"/>
        <end position="1640"/>
    </location>
</feature>
<feature type="repeat" description="HEAT 26" evidence="2">
    <location>
        <begin position="1641"/>
        <end position="1679"/>
    </location>
</feature>
<feature type="repeat" description="HEAT 27" evidence="2">
    <location>
        <begin position="1681"/>
        <end position="1717"/>
    </location>
</feature>
<feature type="repeat" description="HEAT 28" evidence="2">
    <location>
        <begin position="1721"/>
        <end position="1758"/>
    </location>
</feature>
<feature type="repeat" description="HEAT 29" evidence="2">
    <location>
        <begin position="1760"/>
        <end position="1796"/>
    </location>
</feature>
<feature type="repeat" description="HEAT 30" evidence="2">
    <location>
        <begin position="1825"/>
        <end position="1862"/>
    </location>
</feature>
<feature type="repeat" description="HEAT 31" evidence="2">
    <location>
        <begin position="1863"/>
        <end position="1903"/>
    </location>
</feature>
<feature type="repeat" description="HEAT 32" evidence="2">
    <location>
        <begin position="1905"/>
        <end position="1942"/>
    </location>
</feature>
<feature type="repeat" description="HEAT 33" evidence="2">
    <location>
        <begin position="1947"/>
        <end position="1984"/>
    </location>
</feature>
<feature type="repeat" description="HEAT 34" evidence="2">
    <location>
        <begin position="1985"/>
        <end position="2024"/>
    </location>
</feature>
<feature type="repeat" description="HEAT 35" evidence="2">
    <location>
        <begin position="2026"/>
        <end position="2055"/>
    </location>
</feature>
<feature type="repeat" description="HEAT 36" evidence="2">
    <location>
        <begin position="2057"/>
        <end position="2095"/>
    </location>
</feature>
<feature type="repeat" description="HEAT 37" evidence="2">
    <location>
        <begin position="2097"/>
        <end position="2134"/>
    </location>
</feature>
<feature type="repeat" description="HEAT 38" evidence="2">
    <location>
        <begin position="2138"/>
        <end position="2175"/>
    </location>
</feature>
<feature type="repeat" description="HEAT 39" evidence="2">
    <location>
        <begin position="2206"/>
        <end position="2243"/>
    </location>
</feature>
<feature type="repeat" description="HEAT 40" evidence="2">
    <location>
        <begin position="2250"/>
        <end position="2286"/>
    </location>
</feature>
<feature type="repeat" description="HEAT 41" evidence="2">
    <location>
        <begin position="2290"/>
        <end position="2328"/>
    </location>
</feature>
<feature type="repeat" description="HEAT 42" evidence="2">
    <location>
        <begin position="2347"/>
        <end position="2384"/>
    </location>
</feature>
<feature type="repeat" description="HEAT 43" evidence="2">
    <location>
        <begin position="2392"/>
        <end position="2429"/>
    </location>
</feature>
<feature type="repeat" description="HEAT 44" evidence="2">
    <location>
        <begin position="2450"/>
        <end position="2487"/>
    </location>
</feature>
<feature type="repeat" description="HEAT 45" evidence="2">
    <location>
        <begin position="2506"/>
        <end position="2546"/>
    </location>
</feature>
<feature type="region of interest" description="EF3-like region" evidence="25">
    <location>
        <begin position="1330"/>
        <end position="1641"/>
    </location>
</feature>
<feature type="region of interest" description="RWDBD region" evidence="27">
    <location>
        <begin position="2207"/>
        <end position="2356"/>
    </location>
</feature>
<feature type="mutagenesis site" description="Does not inhibit interaction with GCN20, reduces ribosome binding, ribosome binding by GCN20, weakly impairs eIF-2-alpha phosphorylation but strongly impairs eIF-2-alpha phosphorylation in a YEF3-dependent manner; when associated with A-762; A-765; A-775; 777-A-A-778; 782-A-A-783; 786-A-A-787 and A-790." evidence="10 15">
    <original>KK</original>
    <variation>AA</variation>
    <variation>DD</variation>
    <location>
        <begin position="757"/>
        <end position="758"/>
    </location>
</feature>
<feature type="mutagenesis site" description="Does not inhibit interaction with GCN20, reduces ribosome binding, ribosome binding by GCN20, weakly impairs eIF-2-alpha phosphorylation but strongly impairs eIF-2-alpha phosphorylation in a YEF3-dependent manner; when associated with A-757-758-A; A-765; A-775; 777-A-A-778; 782-A-A-783; 786-A-A-787 and A-790." evidence="10 15">
    <original>K</original>
    <variation>A</variation>
    <location>
        <position position="762"/>
    </location>
</feature>
<feature type="mutagenesis site" description="Does not inhibit interaction with GCN20, reduces ribosome binding, ribosome binding by GCN20, weakly impairs eIF-2-alpha phosphorylation but strongly impairs eIF-2-alpha phosphorylation in a YEF3-dependent manner; when associated with A-757-758-A; A-762; A-775; 777-A-A-778; 782-A-A-783; 786-A-A-787 and A-790." evidence="10 15">
    <original>K</original>
    <variation>A</variation>
    <location>
        <position position="765"/>
    </location>
</feature>
<feature type="mutagenesis site" description="Does not inhibit interaction with GCN20, reduces ribosome binding, ribosome binding by GCN20, weakly impairs eIF-2-alpha phosphorylation but strongly impairs eIF-2-alpha phosphorylation in a YEF3-dependent manner; when associated with A-757-758-A; A-762; A-765; 777-A-A-778; 782-A-A-783; 786-A-A-787 and A-790." evidence="10 15">
    <original>K</original>
    <variation>A</variation>
    <location>
        <position position="775"/>
    </location>
</feature>
<feature type="mutagenesis site" description="Does not inhibit interaction with GCN20, reduces ribosome binding, ribosome binding by GCN20, weakly impairs eIF-2-alpha phosphorylation but strongly impairs eIF-2-alpha phosphorylation in a YEF3-dependent manner; when associated with A-757-758-A; A-762; A-765; A-775; 782-A-A-783; 786-A-A-787 and A-790." evidence="10 15">
    <original>RK</original>
    <variation>AA</variation>
    <location>
        <begin position="777"/>
        <end position="778"/>
    </location>
</feature>
<feature type="mutagenesis site" description="Does not inhibit interaction with GCN20, reduces ribosome binding, ribosome binding by GCN20, weakly impairs eIF-2-alpha phosphorylation but strongly impairs eIF-2-alpha phosphorylation in a YEF3-dependent manner; when associated with A-757-758-A; A-762; A-765; A-775; 777-A-A-778; 786-A-A-787 and A-790." evidence="10 15">
    <original>KK</original>
    <variation>AA</variation>
    <location>
        <begin position="782"/>
        <end position="783"/>
    </location>
</feature>
<feature type="mutagenesis site" description="Does not inhibit interaction with GCN20, reduces ribosome binding, ribosome binding by GCN20, weakly impairs eIF-2-alpha phosphorylation but strongly impairs eIF-2-alpha phosphorylation in a YEF3-dependent manner; when associated with A-757-758-A; A-762; A-765; A-775; 777-A-A-778; 782-A-A-783 and A-790." evidence="10 15">
    <original>KK</original>
    <variation>AA</variation>
    <location>
        <begin position="786"/>
        <end position="787"/>
    </location>
</feature>
<feature type="mutagenesis site" description="Does not inhibit interaction with GCN20, reduces ribosome binding, ribosome binding by GCN20, weakly impairs eIF-2-alpha phosphorylation but strongly impairs eIF-2-alpha phosphorylation in a YEF3-dependent manner; when associated with A-757-758-A; A-762; A-765; A-775; 777-A-A-778; 782-A-A-783 and 786-A-A-787." evidence="10 15">
    <original>K</original>
    <variation>A</variation>
    <location>
        <position position="790"/>
    </location>
</feature>
<feature type="mutagenesis site" description="Decreases interaction with GCN20 and polysomal association." evidence="23">
    <original>G</original>
    <variation>D</variation>
    <location>
        <position position="1444"/>
    </location>
</feature>
<feature type="mutagenesis site" description="Does not inhibit interaction with GCN20, reduces ribosome binding, ribosome binding by GCN20 and strongly impairs eIF-2-alpha phosphorylation; when associated with 1461-A--A-1465." evidence="10">
    <original>E</original>
    <variation>A</variation>
    <location>
        <position position="1458"/>
    </location>
</feature>
<feature type="mutagenesis site" description="Does not inhibit interaction with GCN20, reduces ribosome binding, ribosome binding by GCN20 and strongly impairs eIF-2-alpha phosphorylation; when associated with A-1458." evidence="10">
    <original>WRTKR</original>
    <variation>AAAAA</variation>
    <location>
        <begin position="1461"/>
        <end position="1465"/>
    </location>
</feature>
<feature type="mutagenesis site" description="Does not affect ability to activate GCN2." evidence="20">
    <original>N</original>
    <variation>A</variation>
    <location>
        <position position="2224"/>
    </location>
</feature>
<feature type="mutagenesis site" description="Does not affect ability to activate GCN2." evidence="20">
    <original>R</original>
    <variation>A</variation>
    <location>
        <position position="2227"/>
    </location>
</feature>
<feature type="mutagenesis site" description="Does not affect ability to activate GCN2." evidence="20">
    <original>N</original>
    <variation>A</variation>
    <location>
        <position position="2245"/>
    </location>
</feature>
<feature type="mutagenesis site" description="Increased ability to activate GCN2." evidence="20">
    <original>K</original>
    <variation>A</variation>
    <location>
        <position position="2247"/>
    </location>
</feature>
<feature type="mutagenesis site" description="Does not affect ability to activate GCN2." evidence="20">
    <original>S</original>
    <variation>A</variation>
    <location>
        <position position="2251"/>
    </location>
</feature>
<feature type="mutagenesis site" description="Decreases interaction with GCN2 and YIH1 but not with GCN20 and ribosomes." evidence="6 9 12 20">
    <original>R</original>
    <variation>A</variation>
    <location>
        <position position="2259"/>
    </location>
</feature>
<feature type="mutagenesis site" description="Increased ability to activate GCN2." evidence="20">
    <original>V</original>
    <variation>A</variation>
    <location>
        <position position="2261"/>
    </location>
</feature>
<feature type="mutagenesis site" description="Does not affect ability to activate GCN2." evidence="20">
    <original>V</original>
    <variation>D</variation>
    <location>
        <position position="2261"/>
    </location>
</feature>
<feature type="mutagenesis site" description="Increased ability to activate GCN2." evidence="20">
    <original>E</original>
    <variation>A</variation>
    <location>
        <position position="2263"/>
    </location>
</feature>
<feature type="mutagenesis site" description="Increased ability to activate GCN2." evidence="20">
    <original>R</original>
    <variation>A</variation>
    <location>
        <position position="2264"/>
    </location>
</feature>
<feature type="mutagenesis site" description="Impaired ability to activate GCN2." evidence="20">
    <original>K</original>
    <variation>A</variation>
    <location>
        <position position="2270"/>
    </location>
</feature>
<feature type="mutagenesis site" description="Impaired ability to activate GCN2." evidence="20">
    <original>R</original>
    <variation>A</variation>
    <location>
        <position position="2289"/>
    </location>
</feature>
<feature type="mutagenesis site" description="Does not affect ability to activate GCN2." evidence="20">
    <original>F</original>
    <variation>E</variation>
    <location>
        <position position="2291"/>
    </location>
</feature>
<feature type="mutagenesis site" description="Does not interact with GCN2, impairs eIF-2-alpha phosphorylation and fails to derepress GCN4 translation in amino acid-starved cells." evidence="7">
    <original>F</original>
    <variation>L</variation>
    <location>
        <position position="2291"/>
    </location>
</feature>
<feature type="mutagenesis site" description="Increased ability to activate GCN2." evidence="20">
    <original>Q</original>
    <variation>A</variation>
    <location>
        <position position="2294"/>
    </location>
</feature>
<feature type="mutagenesis site" description="Does not affect ability to activate GCN2." evidence="20">
    <original>Q</original>
    <variation>D</variation>
    <location>
        <position position="2294"/>
    </location>
</feature>
<feature type="mutagenesis site" description="Impaired ability to activate GCN2." evidence="20">
    <original>R</original>
    <variation>A</variation>
    <location>
        <position position="2297"/>
    </location>
</feature>
<feature type="mutagenesis site" description="Impaired ability to activate GCN2." evidence="20">
    <original>K</original>
    <variation>A</variation>
    <location>
        <position position="2301"/>
    </location>
</feature>
<feature type="mutagenesis site" description="Does not interact with GCN2." evidence="7">
    <original>S</original>
    <variation>P</variation>
    <location>
        <position position="2304"/>
    </location>
</feature>
<feature type="mutagenesis site" description="Does not affect ability to activate GCN2." evidence="20">
    <original>D</original>
    <variation>A</variation>
    <location>
        <position position="2305"/>
    </location>
</feature>
<feature type="mutagenesis site" description="Does not affect ability to activate GCN2." evidence="20">
    <original>E</original>
    <variation>A</variation>
    <location>
        <position position="2309"/>
    </location>
</feature>
<feature type="mutagenesis site" description="Does not affect ability to activate GCN2." evidence="20">
    <original>D</original>
    <variation>A</variation>
    <location>
        <position position="2330"/>
    </location>
</feature>
<feature type="mutagenesis site" description="Does not affect ability to activate GCN2." evidence="20">
    <original>E</original>
    <variation>A</variation>
    <location>
        <position position="2335"/>
    </location>
</feature>
<feature type="mutagenesis site" description="Does not interact with GCN2." evidence="7">
    <original>L</original>
    <variation>P</variation>
    <location>
        <position position="2353"/>
    </location>
</feature>
<feature type="mutagenesis site" description="Does not affect ability to activate GCN2." evidence="20">
    <original>E</original>
    <variation>A</variation>
    <location>
        <position position="2382"/>
    </location>
</feature>
<gene>
    <name evidence="24 28" type="primary">GCN1</name>
    <name type="ordered locus">YGL195W</name>
    <name type="ORF">G1318</name>
</gene>
<name>GCN1_YEAST</name>
<comment type="function">
    <text evidence="1 3 5 7 10 16 18 19 20 21 22 23">Ribosome collision sensor that activates a translation quality control pathway when a ribosome has stalled during translation (PubMed:33790014). Directly binds to the ribosome and acts as a sentinel for colliding ribosomes (By similarity). GCN1 also acts as a positive activator of the integrated stress response (ISR) by mediating activation of GCN2 in response to low amino acid, carbon, or purine availability (PubMed:10733573, PubMed:24333428, PubMed:33338396, PubMed:8497269). Component of the GCN1-GCN20 complex that forms a complex with GCN2 on translating ribosomes: during this process, GCN1 acts as a chaperone to facilitate delivery of uncharged tRNAs that enter the A-site of ribosomes to the tRNA-binding domain of GCN2, and hence stimulating GCN2 kinase activity, leading to phosphorylation of eukaryotic translation initiation factor 2 (eIF-2-alpha/SUI2) (PubMed:15722345, PubMed:36441697, PubMed:7621831, PubMed:9234705). eIF-2-alpha/SUI2 phosphorylation converts eIF-2-alpha/SUI2 into a global protein synthesis inhibitor, leading to a global attenuation of cap-dependent translation, and thus to a reduced overall utilization of amino acids, while concomitantly initiating the preferential translation of ISR-specific mRNAs, such as the transcriptional activator GCN4, and hence allowing GCN4-mediated reprogramming of amino acid biosynthetic gene expression to alleviate nutrient depletion (PubMed:10801780, PubMed:11350982, PubMed:15722345, PubMed:8497269).</text>
</comment>
<comment type="subunit">
    <text evidence="4 5 6 7 9 10 11 12 13 14 15 17 20 21 23">Interacts (via N- and C-terminus) with GCN2 (via N-terminal RWD domain); this interaction stimulates GCN2 kinase activity in a GCN20-dependent manner in response to amino acid starvation (PubMed:10775272, PubMed:10801780, PubMed:11101534, PubMed:11350982, PubMed:15126500, PubMed:15722345, PubMed:21849502, PubMed:36441697). Interacts (via C-terminus) with GCN20 (via N-terminus); this interaction stimulates GCN2 kinase activity in response to amino acid starvation (PubMed:11101534, PubMed:7621831, PubMed:9234705). The GCN1-GCN20 complex interacts with GCN2 on translating ribosomes in amino acid-starved cells; GCN1 may bind near the ribosomal A-site and promotes the transfer of uncharged tRNAs from the A-site to the tRNA-binding domain in GCN2 for its subsequent kinase activation, and hence allowing GCN4 translational activation and derepression of amino acid biosynthetic genes (PubMed:10775272, PubMed:11101534, PubMed:7621831, PubMed:9234705). Interacts (via C-terminus) with YIH1 (via N-terminus); this interaction reduces the GCN1-GCN20 complex formation and prevents the interaction of GCN1 with GCN2 and GCN2 kinase activation in amino acid-starved cells (PubMed:15126500, PubMed:21239490, PubMed:22404850). Interacts with GIR2; this interaction prevents the interaction of GCN1 with GCN2 and GCN2 kinase activation in amino acid-starved cells (PubMed:19448108). Interacts (via middle region) with RPS10A and RPS10B; these interactions are direct and promote GCN2 kinase activation (PubMed:25437641). Associates (via N-terminus) with ribosomes; this association is stimulated in a ATP- and GCN20-dependent manner and is necessary to activate GCN2 kinase activity (PubMed:11101534, PubMed:15722345, PubMed:19448108, PubMed:21849502, PubMed:22888004, PubMed:25437641, PubMed:7621831, PubMed:9234705).</text>
</comment>
<comment type="interaction">
    <interactant intactId="EBI-7442">
        <id>P33892</id>
    </interactant>
    <interactant intactId="EBI-7423">
        <id>P43535</id>
        <label>GCN20</label>
    </interactant>
    <organismsDiffer>false</organismsDiffer>
    <experiments>4</experiments>
</comment>
<comment type="subcellular location">
    <subcellularLocation>
        <location evidence="23">Cytoplasm</location>
    </subcellularLocation>
</comment>
<comment type="domain">
    <text evidence="23">The EF3-like region is necessary and sufficient for interaction with GCN20 (PubMed:9234705).</text>
</comment>
<comment type="domain">
    <text evidence="20">The RWDBD (RWD-binding domain) region mediates binding to RWD domain-containing proteins, such as GCN2.</text>
</comment>
<comment type="disruption phenotype">
    <text evidence="3">Inhibits GCN4 derepression in glucose, amino acid, or purine-starved cells.</text>
</comment>
<comment type="miscellaneous">
    <text evidence="8">Present with 7330 molecules/cell in log phase SD medium.</text>
</comment>
<comment type="similarity">
    <text evidence="26">Belongs to the GCN1 family.</text>
</comment>
<protein>
    <recommendedName>
        <fullName evidence="26">eIF-2-alpha kinase activator GCN1</fullName>
    </recommendedName>
    <alternativeName>
        <fullName evidence="28">General control non-derepressible protein 1</fullName>
    </alternativeName>
    <alternativeName>
        <fullName evidence="26">Translational activator GCN1</fullName>
    </alternativeName>
</protein>